<dbReference type="EC" id="3.1.-.-" evidence="1"/>
<dbReference type="EMBL" id="CP000511">
    <property type="protein sequence ID" value="ABM15085.1"/>
    <property type="molecule type" value="Genomic_DNA"/>
</dbReference>
<dbReference type="RefSeq" id="WP_011781463.1">
    <property type="nucleotide sequence ID" value="NZ_JACKSD010000300.1"/>
</dbReference>
<dbReference type="SMR" id="A1TD35"/>
<dbReference type="STRING" id="350058.Mvan_4308"/>
<dbReference type="KEGG" id="mva:Mvan_4308"/>
<dbReference type="eggNOG" id="COG1637">
    <property type="taxonomic scope" value="Bacteria"/>
</dbReference>
<dbReference type="HOGENOM" id="CLU_069350_0_0_11"/>
<dbReference type="Proteomes" id="UP000009159">
    <property type="component" value="Chromosome"/>
</dbReference>
<dbReference type="GO" id="GO:0005737">
    <property type="term" value="C:cytoplasm"/>
    <property type="evidence" value="ECO:0007669"/>
    <property type="project" value="UniProtKB-SubCell"/>
</dbReference>
<dbReference type="GO" id="GO:0003677">
    <property type="term" value="F:DNA binding"/>
    <property type="evidence" value="ECO:0007669"/>
    <property type="project" value="UniProtKB-KW"/>
</dbReference>
<dbReference type="GO" id="GO:0000014">
    <property type="term" value="F:single-stranded DNA endodeoxyribonuclease activity"/>
    <property type="evidence" value="ECO:0007669"/>
    <property type="project" value="UniProtKB-UniRule"/>
</dbReference>
<dbReference type="CDD" id="cd22341">
    <property type="entry name" value="NucS-like"/>
    <property type="match status" value="1"/>
</dbReference>
<dbReference type="Gene3D" id="2.70.180.20">
    <property type="match status" value="1"/>
</dbReference>
<dbReference type="Gene3D" id="3.40.1350.10">
    <property type="match status" value="1"/>
</dbReference>
<dbReference type="HAMAP" id="MF_00722">
    <property type="entry name" value="NucS"/>
    <property type="match status" value="1"/>
</dbReference>
<dbReference type="InterPro" id="IPR002793">
    <property type="entry name" value="Endonuclease_NucS"/>
</dbReference>
<dbReference type="InterPro" id="IPR048301">
    <property type="entry name" value="NucS_C"/>
</dbReference>
<dbReference type="InterPro" id="IPR048302">
    <property type="entry name" value="NucS_N"/>
</dbReference>
<dbReference type="InterPro" id="IPR049173">
    <property type="entry name" value="NucS_N_sf"/>
</dbReference>
<dbReference type="InterPro" id="IPR011856">
    <property type="entry name" value="tRNA_endonuc-like_dom_sf"/>
</dbReference>
<dbReference type="NCBIfam" id="NF002876">
    <property type="entry name" value="PRK03298.1"/>
    <property type="match status" value="1"/>
</dbReference>
<dbReference type="PANTHER" id="PTHR38814">
    <property type="entry name" value="ENDONUCLEASE NUCS"/>
    <property type="match status" value="1"/>
</dbReference>
<dbReference type="PANTHER" id="PTHR38814:SF1">
    <property type="entry name" value="ENDONUCLEASE NUCS"/>
    <property type="match status" value="1"/>
</dbReference>
<dbReference type="Pfam" id="PF01939">
    <property type="entry name" value="NucS_C"/>
    <property type="match status" value="1"/>
</dbReference>
<dbReference type="Pfam" id="PF21003">
    <property type="entry name" value="NucS_N"/>
    <property type="match status" value="1"/>
</dbReference>
<comment type="function">
    <text evidence="1">Cleaves both 3' and 5' ssDNA extremities of branched DNA structures.</text>
</comment>
<comment type="subcellular location">
    <subcellularLocation>
        <location evidence="1">Cytoplasm</location>
    </subcellularLocation>
</comment>
<comment type="similarity">
    <text evidence="1">Belongs to the NucS endonuclease family.</text>
</comment>
<gene>
    <name evidence="1" type="primary">nucS</name>
    <name type="ordered locus">Mvan_4308</name>
</gene>
<keyword id="KW-0963">Cytoplasm</keyword>
<keyword id="KW-0238">DNA-binding</keyword>
<keyword id="KW-0255">Endonuclease</keyword>
<keyword id="KW-0378">Hydrolase</keyword>
<keyword id="KW-0540">Nuclease</keyword>
<organism>
    <name type="scientific">Mycolicibacterium vanbaalenii (strain DSM 7251 / JCM 13017 / BCRC 16820 / KCTC 9966 / NRRL B-24157 / PYR-1)</name>
    <name type="common">Mycobacterium vanbaalenii</name>
    <dbReference type="NCBI Taxonomy" id="350058"/>
    <lineage>
        <taxon>Bacteria</taxon>
        <taxon>Bacillati</taxon>
        <taxon>Actinomycetota</taxon>
        <taxon>Actinomycetes</taxon>
        <taxon>Mycobacteriales</taxon>
        <taxon>Mycobacteriaceae</taxon>
        <taxon>Mycolicibacterium</taxon>
    </lineage>
</organism>
<reference key="1">
    <citation type="submission" date="2006-12" db="EMBL/GenBank/DDBJ databases">
        <title>Complete sequence of Mycobacterium vanbaalenii PYR-1.</title>
        <authorList>
            <consortium name="US DOE Joint Genome Institute"/>
            <person name="Copeland A."/>
            <person name="Lucas S."/>
            <person name="Lapidus A."/>
            <person name="Barry K."/>
            <person name="Detter J.C."/>
            <person name="Glavina del Rio T."/>
            <person name="Hammon N."/>
            <person name="Israni S."/>
            <person name="Dalin E."/>
            <person name="Tice H."/>
            <person name="Pitluck S."/>
            <person name="Singan V."/>
            <person name="Schmutz J."/>
            <person name="Larimer F."/>
            <person name="Land M."/>
            <person name="Hauser L."/>
            <person name="Kyrpides N."/>
            <person name="Anderson I.J."/>
            <person name="Miller C."/>
            <person name="Richardson P."/>
        </authorList>
    </citation>
    <scope>NUCLEOTIDE SEQUENCE [LARGE SCALE GENOMIC DNA]</scope>
    <source>
        <strain>DSM 7251 / JCM 13017 / BCRC 16820 / KCTC 9966 / NRRL B-24157 / PYR-1</strain>
    </source>
</reference>
<accession>A1TD35</accession>
<evidence type="ECO:0000255" key="1">
    <source>
        <dbReference type="HAMAP-Rule" id="MF_00722"/>
    </source>
</evidence>
<protein>
    <recommendedName>
        <fullName evidence="1">Endonuclease NucS</fullName>
        <ecNumber evidence="1">3.1.-.-</ecNumber>
    </recommendedName>
</protein>
<proteinExistence type="inferred from homology"/>
<feature type="chain" id="PRO_1000045834" description="Endonuclease NucS">
    <location>
        <begin position="1"/>
        <end position="223"/>
    </location>
</feature>
<name>NUCS_MYCVP</name>
<sequence>MRLVIAQCTVDYVGRLTAHLPSARRLLLFKADGSVSVHADDRAYKPLNWMSPPCWIVEPTDGDATVWVVENKAGEQLRITVEAIEHDSSHELGVDPGLVKDGVEAHLQALLAEHVELLGAGYTLVRREYMTPIGPVDLLCRDEQGRSVAVEIKRRGEIDGVEQLTRYLELLNRDSLLAPVAGVFAAQQIKPQARTLATDRGIRCLTLDYDKMRGMDNDEFRLF</sequence>